<feature type="chain" id="PRO_0000070256" description="G-protein coupled receptor homolog U51">
    <location>
        <begin position="1"/>
        <end position="301"/>
    </location>
</feature>
<feature type="topological domain" description="Extracellular" evidence="1">
    <location>
        <begin position="1"/>
        <end position="15"/>
    </location>
</feature>
<feature type="transmembrane region" description="Helical; Name=1" evidence="1">
    <location>
        <begin position="16"/>
        <end position="36"/>
    </location>
</feature>
<feature type="topological domain" description="Cytoplasmic" evidence="1">
    <location>
        <begin position="37"/>
        <end position="48"/>
    </location>
</feature>
<feature type="transmembrane region" description="Helical; Name=2" evidence="1">
    <location>
        <begin position="49"/>
        <end position="69"/>
    </location>
</feature>
<feature type="topological domain" description="Extracellular" evidence="1">
    <location>
        <begin position="70"/>
        <end position="82"/>
    </location>
</feature>
<feature type="transmembrane region" description="Helical; Name=3" evidence="1">
    <location>
        <begin position="83"/>
        <end position="103"/>
    </location>
</feature>
<feature type="topological domain" description="Cytoplasmic" evidence="1">
    <location>
        <begin position="104"/>
        <end position="122"/>
    </location>
</feature>
<feature type="transmembrane region" description="Helical; Name=4" evidence="1">
    <location>
        <begin position="123"/>
        <end position="143"/>
    </location>
</feature>
<feature type="topological domain" description="Extracellular" evidence="1">
    <location>
        <begin position="144"/>
        <end position="168"/>
    </location>
</feature>
<feature type="transmembrane region" description="Helical; Name=5" evidence="1">
    <location>
        <begin position="169"/>
        <end position="189"/>
    </location>
</feature>
<feature type="topological domain" description="Cytoplasmic" evidence="1">
    <location>
        <begin position="190"/>
        <end position="199"/>
    </location>
</feature>
<feature type="transmembrane region" description="Helical; Name=6" evidence="1">
    <location>
        <begin position="200"/>
        <end position="220"/>
    </location>
</feature>
<feature type="topological domain" description="Extracellular" evidence="1">
    <location>
        <begin position="221"/>
        <end position="238"/>
    </location>
</feature>
<feature type="transmembrane region" description="Helical; Name=7" evidence="1">
    <location>
        <begin position="239"/>
        <end position="259"/>
    </location>
</feature>
<feature type="topological domain" description="Cytoplasmic" evidence="1">
    <location>
        <begin position="260"/>
        <end position="301"/>
    </location>
</feature>
<name>VU51_HHV6U</name>
<accession>P52382</accession>
<protein>
    <recommendedName>
        <fullName>G-protein coupled receptor homolog U51</fullName>
    </recommendedName>
</protein>
<proteinExistence type="inferred from homology"/>
<organismHost>
    <name type="scientific">Homo sapiens</name>
    <name type="common">Human</name>
    <dbReference type="NCBI Taxonomy" id="9606"/>
</organismHost>
<evidence type="ECO:0000255" key="1"/>
<evidence type="ECO:0000255" key="2">
    <source>
        <dbReference type="PROSITE-ProRule" id="PRU00521"/>
    </source>
</evidence>
<comment type="subcellular location">
    <subcellularLocation>
        <location>Host cell membrane</location>
        <topology>Multi-pass membrane protein</topology>
    </subcellularLocation>
</comment>
<comment type="similarity">
    <text evidence="2">Belongs to the G-protein coupled receptor 1 family.</text>
</comment>
<gene>
    <name type="primary">U51</name>
    <name type="synonym">XKRF1</name>
</gene>
<reference key="1">
    <citation type="journal article" date="1995" name="Virology">
        <title>The DNA sequence of human herpesvirus-6: structure, coding content, and genome evolution.</title>
        <authorList>
            <person name="Gompels U.A."/>
            <person name="Nicholas J."/>
            <person name="Lawrence G.L."/>
            <person name="Jones M."/>
            <person name="Thomson B.J."/>
            <person name="Martin M.E.D."/>
            <person name="Efstathiou S."/>
            <person name="Craxton M.A."/>
            <person name="Macaulay H.A."/>
        </authorList>
    </citation>
    <scope>NUCLEOTIDE SEQUENCE [LARGE SCALE GENOMIC DNA]</scope>
</reference>
<dbReference type="EMBL" id="X83413">
    <property type="protein sequence ID" value="CAA58385.1"/>
    <property type="molecule type" value="Genomic_DNA"/>
</dbReference>
<dbReference type="RefSeq" id="NP_042944.1">
    <property type="nucleotide sequence ID" value="NC_001664.2"/>
</dbReference>
<dbReference type="SMR" id="P52382"/>
<dbReference type="DNASU" id="1487931"/>
<dbReference type="GeneID" id="1487931"/>
<dbReference type="KEGG" id="vg:1487931"/>
<dbReference type="Proteomes" id="UP000009295">
    <property type="component" value="Segment"/>
</dbReference>
<dbReference type="GO" id="GO:0020002">
    <property type="term" value="C:host cell plasma membrane"/>
    <property type="evidence" value="ECO:0007669"/>
    <property type="project" value="UniProtKB-SubCell"/>
</dbReference>
<dbReference type="GO" id="GO:0016020">
    <property type="term" value="C:membrane"/>
    <property type="evidence" value="ECO:0007669"/>
    <property type="project" value="UniProtKB-KW"/>
</dbReference>
<dbReference type="GO" id="GO:0004930">
    <property type="term" value="F:G protein-coupled receptor activity"/>
    <property type="evidence" value="ECO:0007669"/>
    <property type="project" value="UniProtKB-KW"/>
</dbReference>
<dbReference type="Gene3D" id="1.20.1070.10">
    <property type="entry name" value="Rhodopsin 7-helix transmembrane proteins"/>
    <property type="match status" value="1"/>
</dbReference>
<dbReference type="InterPro" id="IPR000276">
    <property type="entry name" value="GPCR_Rhodpsn"/>
</dbReference>
<dbReference type="InterPro" id="IPR017452">
    <property type="entry name" value="GPCR_Rhodpsn_7TM"/>
</dbReference>
<dbReference type="Pfam" id="PF00001">
    <property type="entry name" value="7tm_1"/>
    <property type="match status" value="1"/>
</dbReference>
<dbReference type="SUPFAM" id="SSF81321">
    <property type="entry name" value="Family A G protein-coupled receptor-like"/>
    <property type="match status" value="1"/>
</dbReference>
<dbReference type="PROSITE" id="PS50262">
    <property type="entry name" value="G_PROTEIN_RECEP_F1_2"/>
    <property type="match status" value="1"/>
</dbReference>
<keyword id="KW-0297">G-protein coupled receptor</keyword>
<keyword id="KW-1032">Host cell membrane</keyword>
<keyword id="KW-1043">Host membrane</keyword>
<keyword id="KW-0472">Membrane</keyword>
<keyword id="KW-0675">Receptor</keyword>
<keyword id="KW-1185">Reference proteome</keyword>
<keyword id="KW-0807">Transducer</keyword>
<keyword id="KW-0812">Transmembrane</keyword>
<keyword id="KW-1133">Transmembrane helix</keyword>
<organism>
    <name type="scientific">Human herpesvirus 6A (strain Uganda-1102)</name>
    <name type="common">HHV-6 variant A</name>
    <name type="synonym">Human B lymphotropic virus</name>
    <dbReference type="NCBI Taxonomy" id="10370"/>
    <lineage>
        <taxon>Viruses</taxon>
        <taxon>Duplodnaviria</taxon>
        <taxon>Heunggongvirae</taxon>
        <taxon>Peploviricota</taxon>
        <taxon>Herviviricetes</taxon>
        <taxon>Herpesvirales</taxon>
        <taxon>Orthoherpesviridae</taxon>
        <taxon>Betaherpesvirinae</taxon>
        <taxon>Roseolovirus</taxon>
        <taxon>Roseolovirus humanbeta6a</taxon>
        <taxon>Human betaherpesvirus 6A</taxon>
    </lineage>
</organism>
<sequence length="301" mass="34714">MEKETKSLAWPATAEFYGWVFIFSSIQLCTMVLLTVRFNSFKVGREYAVFTFAGMSFNCFLLPIKMGLLSGHWSLPRDFCAILLYIDDFSIYFSSWSLVFMAIERINHFCYSTPLLNENSKALAKVCFPIVWIISGVQALQMLNNYKATALQNETPQCFLAFLRSGYDMWLMLVYSVMIPVMLVFIYIYSKNFMLLKDELSTVTTYLCIYLLLGTIAHLPKAGLSEIESDKIFYGLRDIFMALPVLKVYYIPVMAYCMACDDHTVPVRLCSIWLVNLCKKCFSCTRREKESDLEVGIKMLK</sequence>